<accession>Q71YJ0</accession>
<evidence type="ECO:0000255" key="1">
    <source>
        <dbReference type="HAMAP-Rule" id="MF_00366"/>
    </source>
</evidence>
<evidence type="ECO:0000305" key="2"/>
<feature type="chain" id="PRO_0000128949" description="DNA-directed RNA polymerase subunit omega">
    <location>
        <begin position="1"/>
        <end position="67"/>
    </location>
</feature>
<dbReference type="EC" id="2.7.7.6" evidence="1"/>
<dbReference type="EMBL" id="AE017262">
    <property type="protein sequence ID" value="AAT04624.1"/>
    <property type="status" value="ALT_INIT"/>
    <property type="molecule type" value="Genomic_DNA"/>
</dbReference>
<dbReference type="RefSeq" id="WP_003728294.1">
    <property type="nucleotide sequence ID" value="NC_002973.6"/>
</dbReference>
<dbReference type="SMR" id="Q71YJ0"/>
<dbReference type="GeneID" id="93239737"/>
<dbReference type="KEGG" id="lmf:LMOf2365_1854"/>
<dbReference type="HOGENOM" id="CLU_125406_6_0_9"/>
<dbReference type="GO" id="GO:0000428">
    <property type="term" value="C:DNA-directed RNA polymerase complex"/>
    <property type="evidence" value="ECO:0007669"/>
    <property type="project" value="UniProtKB-KW"/>
</dbReference>
<dbReference type="GO" id="GO:0003677">
    <property type="term" value="F:DNA binding"/>
    <property type="evidence" value="ECO:0007669"/>
    <property type="project" value="UniProtKB-UniRule"/>
</dbReference>
<dbReference type="GO" id="GO:0003899">
    <property type="term" value="F:DNA-directed RNA polymerase activity"/>
    <property type="evidence" value="ECO:0007669"/>
    <property type="project" value="UniProtKB-UniRule"/>
</dbReference>
<dbReference type="GO" id="GO:0006351">
    <property type="term" value="P:DNA-templated transcription"/>
    <property type="evidence" value="ECO:0007669"/>
    <property type="project" value="UniProtKB-UniRule"/>
</dbReference>
<dbReference type="Gene3D" id="3.90.940.10">
    <property type="match status" value="1"/>
</dbReference>
<dbReference type="HAMAP" id="MF_00366">
    <property type="entry name" value="RNApol_bact_RpoZ"/>
    <property type="match status" value="1"/>
</dbReference>
<dbReference type="InterPro" id="IPR003716">
    <property type="entry name" value="DNA-dir_RNA_pol_omega"/>
</dbReference>
<dbReference type="InterPro" id="IPR006110">
    <property type="entry name" value="Pol_omega/Rpo6/RPB6"/>
</dbReference>
<dbReference type="InterPro" id="IPR036161">
    <property type="entry name" value="RPB6/omega-like_sf"/>
</dbReference>
<dbReference type="NCBIfam" id="TIGR00690">
    <property type="entry name" value="rpoZ"/>
    <property type="match status" value="1"/>
</dbReference>
<dbReference type="PANTHER" id="PTHR34476">
    <property type="entry name" value="DNA-DIRECTED RNA POLYMERASE SUBUNIT OMEGA"/>
    <property type="match status" value="1"/>
</dbReference>
<dbReference type="PANTHER" id="PTHR34476:SF1">
    <property type="entry name" value="DNA-DIRECTED RNA POLYMERASE SUBUNIT OMEGA"/>
    <property type="match status" value="1"/>
</dbReference>
<dbReference type="Pfam" id="PF01192">
    <property type="entry name" value="RNA_pol_Rpb6"/>
    <property type="match status" value="1"/>
</dbReference>
<dbReference type="SMART" id="SM01409">
    <property type="entry name" value="RNA_pol_Rpb6"/>
    <property type="match status" value="1"/>
</dbReference>
<dbReference type="SUPFAM" id="SSF63562">
    <property type="entry name" value="RPB6/omega subunit-like"/>
    <property type="match status" value="1"/>
</dbReference>
<keyword id="KW-0240">DNA-directed RNA polymerase</keyword>
<keyword id="KW-0548">Nucleotidyltransferase</keyword>
<keyword id="KW-0804">Transcription</keyword>
<keyword id="KW-0808">Transferase</keyword>
<proteinExistence type="inferred from homology"/>
<comment type="function">
    <text evidence="1">Promotes RNA polymerase assembly. Latches the N- and C-terminal regions of the beta' subunit thereby facilitating its interaction with the beta and alpha subunits.</text>
</comment>
<comment type="catalytic activity">
    <reaction evidence="1">
        <text>RNA(n) + a ribonucleoside 5'-triphosphate = RNA(n+1) + diphosphate</text>
        <dbReference type="Rhea" id="RHEA:21248"/>
        <dbReference type="Rhea" id="RHEA-COMP:14527"/>
        <dbReference type="Rhea" id="RHEA-COMP:17342"/>
        <dbReference type="ChEBI" id="CHEBI:33019"/>
        <dbReference type="ChEBI" id="CHEBI:61557"/>
        <dbReference type="ChEBI" id="CHEBI:140395"/>
        <dbReference type="EC" id="2.7.7.6"/>
    </reaction>
</comment>
<comment type="subunit">
    <text evidence="1">The RNAP catalytic core consists of 2 alpha, 1 beta, 1 beta' and 1 omega subunit. When a sigma factor is associated with the core the holoenzyme is formed, which can initiate transcription.</text>
</comment>
<comment type="similarity">
    <text evidence="1">Belongs to the RNA polymerase subunit omega family.</text>
</comment>
<comment type="sequence caution" evidence="2">
    <conflict type="erroneous initiation">
        <sequence resource="EMBL-CDS" id="AAT04624"/>
    </conflict>
</comment>
<organism>
    <name type="scientific">Listeria monocytogenes serotype 4b (strain F2365)</name>
    <dbReference type="NCBI Taxonomy" id="265669"/>
    <lineage>
        <taxon>Bacteria</taxon>
        <taxon>Bacillati</taxon>
        <taxon>Bacillota</taxon>
        <taxon>Bacilli</taxon>
        <taxon>Bacillales</taxon>
        <taxon>Listeriaceae</taxon>
        <taxon>Listeria</taxon>
    </lineage>
</organism>
<gene>
    <name evidence="1" type="primary">rpoZ</name>
    <name type="ordered locus">LMOf2365_1854</name>
</gene>
<sequence>MLYPSIDNLLLKIDSKYSLVTVAAKRARYMQLENDKGVLPSYQSDKFVGKALEEIHAGKLVLQNDDK</sequence>
<reference key="1">
    <citation type="journal article" date="2004" name="Nucleic Acids Res.">
        <title>Whole genome comparisons of serotype 4b and 1/2a strains of the food-borne pathogen Listeria monocytogenes reveal new insights into the core genome components of this species.</title>
        <authorList>
            <person name="Nelson K.E."/>
            <person name="Fouts D.E."/>
            <person name="Mongodin E.F."/>
            <person name="Ravel J."/>
            <person name="DeBoy R.T."/>
            <person name="Kolonay J.F."/>
            <person name="Rasko D.A."/>
            <person name="Angiuoli S.V."/>
            <person name="Gill S.R."/>
            <person name="Paulsen I.T."/>
            <person name="Peterson J.D."/>
            <person name="White O."/>
            <person name="Nelson W.C."/>
            <person name="Nierman W.C."/>
            <person name="Beanan M.J."/>
            <person name="Brinkac L.M."/>
            <person name="Daugherty S.C."/>
            <person name="Dodson R.J."/>
            <person name="Durkin A.S."/>
            <person name="Madupu R."/>
            <person name="Haft D.H."/>
            <person name="Selengut J."/>
            <person name="Van Aken S.E."/>
            <person name="Khouri H.M."/>
            <person name="Fedorova N."/>
            <person name="Forberger H.A."/>
            <person name="Tran B."/>
            <person name="Kathariou S."/>
            <person name="Wonderling L.D."/>
            <person name="Uhlich G.A."/>
            <person name="Bayles D.O."/>
            <person name="Luchansky J.B."/>
            <person name="Fraser C.M."/>
        </authorList>
    </citation>
    <scope>NUCLEOTIDE SEQUENCE [LARGE SCALE GENOMIC DNA]</scope>
    <source>
        <strain>F2365</strain>
    </source>
</reference>
<name>RPOZ_LISMF</name>
<protein>
    <recommendedName>
        <fullName evidence="1">DNA-directed RNA polymerase subunit omega</fullName>
        <shortName evidence="1">RNAP omega subunit</shortName>
        <ecNumber evidence="1">2.7.7.6</ecNumber>
    </recommendedName>
    <alternativeName>
        <fullName evidence="1">RNA polymerase omega subunit</fullName>
    </alternativeName>
    <alternativeName>
        <fullName evidence="1">Transcriptase subunit omega</fullName>
    </alternativeName>
</protein>